<feature type="chain" id="PRO_1000148225" description="Putative glutamate--cysteine ligase 2">
    <location>
        <begin position="1"/>
        <end position="377"/>
    </location>
</feature>
<dbReference type="EC" id="6.3.2.2" evidence="1"/>
<dbReference type="EMBL" id="FM209186">
    <property type="protein sequence ID" value="CAW27871.1"/>
    <property type="molecule type" value="Genomic_DNA"/>
</dbReference>
<dbReference type="RefSeq" id="WP_012614195.1">
    <property type="nucleotide sequence ID" value="NC_011770.1"/>
</dbReference>
<dbReference type="SMR" id="B7V9S6"/>
<dbReference type="KEGG" id="pag:PLES_31441"/>
<dbReference type="HOGENOM" id="CLU_044848_0_1_6"/>
<dbReference type="GO" id="GO:0005524">
    <property type="term" value="F:ATP binding"/>
    <property type="evidence" value="ECO:0007669"/>
    <property type="project" value="UniProtKB-KW"/>
</dbReference>
<dbReference type="GO" id="GO:0004357">
    <property type="term" value="F:glutamate-cysteine ligase activity"/>
    <property type="evidence" value="ECO:0007669"/>
    <property type="project" value="UniProtKB-EC"/>
</dbReference>
<dbReference type="GO" id="GO:0042398">
    <property type="term" value="P:modified amino acid biosynthetic process"/>
    <property type="evidence" value="ECO:0007669"/>
    <property type="project" value="InterPro"/>
</dbReference>
<dbReference type="FunFam" id="3.30.590.20:FF:000008">
    <property type="entry name" value="Putative glutamate--cysteine ligase 2"/>
    <property type="match status" value="1"/>
</dbReference>
<dbReference type="Gene3D" id="3.30.590.20">
    <property type="match status" value="1"/>
</dbReference>
<dbReference type="HAMAP" id="MF_01609">
    <property type="entry name" value="Glu_cys_ligase_2"/>
    <property type="match status" value="1"/>
</dbReference>
<dbReference type="InterPro" id="IPR050141">
    <property type="entry name" value="GCL_type2/YbdK_subfam"/>
</dbReference>
<dbReference type="InterPro" id="IPR006336">
    <property type="entry name" value="GCS2"/>
</dbReference>
<dbReference type="InterPro" id="IPR014746">
    <property type="entry name" value="Gln_synth/guanido_kin_cat_dom"/>
</dbReference>
<dbReference type="InterPro" id="IPR011793">
    <property type="entry name" value="YbdK"/>
</dbReference>
<dbReference type="NCBIfam" id="TIGR02050">
    <property type="entry name" value="gshA_cyan_rel"/>
    <property type="match status" value="1"/>
</dbReference>
<dbReference type="NCBIfam" id="NF010039">
    <property type="entry name" value="PRK13515.1"/>
    <property type="match status" value="1"/>
</dbReference>
<dbReference type="PANTHER" id="PTHR36510">
    <property type="entry name" value="GLUTAMATE--CYSTEINE LIGASE 2-RELATED"/>
    <property type="match status" value="1"/>
</dbReference>
<dbReference type="PANTHER" id="PTHR36510:SF1">
    <property type="entry name" value="GLUTAMATE--CYSTEINE LIGASE 2-RELATED"/>
    <property type="match status" value="1"/>
</dbReference>
<dbReference type="Pfam" id="PF04107">
    <property type="entry name" value="GCS2"/>
    <property type="match status" value="1"/>
</dbReference>
<dbReference type="SUPFAM" id="SSF55931">
    <property type="entry name" value="Glutamine synthetase/guanido kinase"/>
    <property type="match status" value="1"/>
</dbReference>
<protein>
    <recommendedName>
        <fullName evidence="1">Putative glutamate--cysteine ligase 2</fullName>
        <ecNumber evidence="1">6.3.2.2</ecNumber>
    </recommendedName>
    <alternativeName>
        <fullName evidence="1">Gamma-glutamylcysteine synthetase 2</fullName>
        <shortName evidence="1">GCS 2</shortName>
        <shortName evidence="1">Gamma-GCS 2</shortName>
    </alternativeName>
</protein>
<reference key="1">
    <citation type="journal article" date="2009" name="Genome Res.">
        <title>Newly introduced genomic prophage islands are critical determinants of in vivo competitiveness in the Liverpool epidemic strain of Pseudomonas aeruginosa.</title>
        <authorList>
            <person name="Winstanley C."/>
            <person name="Langille M.G.I."/>
            <person name="Fothergill J.L."/>
            <person name="Kukavica-Ibrulj I."/>
            <person name="Paradis-Bleau C."/>
            <person name="Sanschagrin F."/>
            <person name="Thomson N.R."/>
            <person name="Winsor G.L."/>
            <person name="Quail M.A."/>
            <person name="Lennard N."/>
            <person name="Bignell A."/>
            <person name="Clarke L."/>
            <person name="Seeger K."/>
            <person name="Saunders D."/>
            <person name="Harris D."/>
            <person name="Parkhill J."/>
            <person name="Hancock R.E.W."/>
            <person name="Brinkman F.S.L."/>
            <person name="Levesque R.C."/>
        </authorList>
    </citation>
    <scope>NUCLEOTIDE SEQUENCE [LARGE SCALE GENOMIC DNA]</scope>
    <source>
        <strain>LESB58</strain>
    </source>
</reference>
<organism>
    <name type="scientific">Pseudomonas aeruginosa (strain LESB58)</name>
    <dbReference type="NCBI Taxonomy" id="557722"/>
    <lineage>
        <taxon>Bacteria</taxon>
        <taxon>Pseudomonadati</taxon>
        <taxon>Pseudomonadota</taxon>
        <taxon>Gammaproteobacteria</taxon>
        <taxon>Pseudomonadales</taxon>
        <taxon>Pseudomonadaceae</taxon>
        <taxon>Pseudomonas</taxon>
    </lineage>
</organism>
<accession>B7V9S6</accession>
<keyword id="KW-0067">ATP-binding</keyword>
<keyword id="KW-0436">Ligase</keyword>
<keyword id="KW-0547">Nucleotide-binding</keyword>
<evidence type="ECO:0000255" key="1">
    <source>
        <dbReference type="HAMAP-Rule" id="MF_01609"/>
    </source>
</evidence>
<gene>
    <name type="ordered locus">PLES_31441</name>
</gene>
<sequence length="377" mass="42445">MTHDLAASGLRFGIEEEFFLLDASDLDIVRSAPAGFVAACRDTLGEHFAEEMFECQVEVASPVFSTLAEAARFHGQARQRLAHLAMDFGLRSLCVGTHPFADWRRARSNPAAHFARLFEDQGRVARRSLVCGLHVHVEIPPSHDRMAVLQRVLPWLPLLLALSASSPFRGGRRSGLASYRRALCGEWPRMNIPPALPDEDAYRRHLALLRETGCIREDGQVWWMIRPSSHVPTLELRICDACPRLADALSLAGLFRALVGEALDADPRALPVARDACLEENYWQALRYGCAGRYLVEGRCVGAGDWLEMAWRQCRPQARRGNEWAYQHACGLLEETSAARQLRRYRRLREAGQERHPALRRLVEELLEENLQPALAG</sequence>
<proteinExistence type="inferred from homology"/>
<name>GCS2_PSEA8</name>
<comment type="function">
    <text evidence="1">ATP-dependent carboxylate-amine ligase which exhibits weak glutamate--cysteine ligase activity.</text>
</comment>
<comment type="catalytic activity">
    <reaction evidence="1">
        <text>L-cysteine + L-glutamate + ATP = gamma-L-glutamyl-L-cysteine + ADP + phosphate + H(+)</text>
        <dbReference type="Rhea" id="RHEA:13285"/>
        <dbReference type="ChEBI" id="CHEBI:15378"/>
        <dbReference type="ChEBI" id="CHEBI:29985"/>
        <dbReference type="ChEBI" id="CHEBI:30616"/>
        <dbReference type="ChEBI" id="CHEBI:35235"/>
        <dbReference type="ChEBI" id="CHEBI:43474"/>
        <dbReference type="ChEBI" id="CHEBI:58173"/>
        <dbReference type="ChEBI" id="CHEBI:456216"/>
        <dbReference type="EC" id="6.3.2.2"/>
    </reaction>
</comment>
<comment type="similarity">
    <text evidence="1">Belongs to the glutamate--cysteine ligase type 2 family. YbdK subfamily.</text>
</comment>